<keyword id="KW-0416">Keratin</keyword>
<keyword id="KW-0677">Repeat</keyword>
<comment type="function">
    <text>In the hair cortex, hair keratin intermediate filaments are embedded in an interfilamentous matrix, consisting of hair keratin-associated proteins (KRTAP), which are essential for the formation of a rigid and resistant hair shaft through their extensive disulfide bond cross-linking with abundant cysteine residues of hair keratins. The matrix proteins include the high-sulfur and high-glycine-tyrosine keratins.</text>
</comment>
<comment type="subunit">
    <text>Interacts with hair keratins.</text>
</comment>
<comment type="similarity">
    <text evidence="1">Belongs to the PMG family.</text>
</comment>
<feature type="chain" id="PRO_0000185206" description="Keratin-associated protein 13-4">
    <location>
        <begin position="1"/>
        <end position="160"/>
    </location>
</feature>
<feature type="repeat" description="1">
    <location>
        <begin position="41"/>
        <end position="50"/>
    </location>
</feature>
<feature type="repeat" description="2">
    <location>
        <begin position="51"/>
        <end position="60"/>
    </location>
</feature>
<feature type="repeat" description="3">
    <location>
        <begin position="61"/>
        <end position="70"/>
    </location>
</feature>
<feature type="repeat" description="4">
    <location>
        <begin position="77"/>
        <end position="86"/>
    </location>
</feature>
<feature type="region of interest" description="4 X 10 AA approximate repeats">
    <location>
        <begin position="41"/>
        <end position="86"/>
    </location>
</feature>
<organism>
    <name type="scientific">Hylobates lar</name>
    <name type="common">Lar gibbon</name>
    <name type="synonym">White-handed gibbon</name>
    <dbReference type="NCBI Taxonomy" id="9580"/>
    <lineage>
        <taxon>Eukaryota</taxon>
        <taxon>Metazoa</taxon>
        <taxon>Chordata</taxon>
        <taxon>Craniata</taxon>
        <taxon>Vertebrata</taxon>
        <taxon>Euteleostomi</taxon>
        <taxon>Mammalia</taxon>
        <taxon>Eutheria</taxon>
        <taxon>Euarchontoglires</taxon>
        <taxon>Primates</taxon>
        <taxon>Haplorrhini</taxon>
        <taxon>Catarrhini</taxon>
        <taxon>Hylobatidae</taxon>
        <taxon>Hylobates</taxon>
    </lineage>
</organism>
<sequence>MSYNCCSRNFSSRSFGGYLYYPGSCPSSLVYSTALCSPSTCQLGSSLYRDCQKTCWEPASCQKSCYHPRTSMLCCPCQTTCSGSLGFGSSSCRSQGYGSRSCYSLGNGSSGFRFLKYGGCGFPSLSYGSRFCYPNYLASGAWQSSCYRPICGSRFYQFTC</sequence>
<reference key="1">
    <citation type="submission" date="2004-11" db="EMBL/GenBank/DDBJ databases">
        <title>Comparative analysis of KAP13.3 and KAP13.4 genes in primates.</title>
        <authorList>
            <person name="Kim H."/>
            <person name="Park E."/>
        </authorList>
    </citation>
    <scope>NUCLEOTIDE SEQUENCE [GENOMIC DNA]</scope>
</reference>
<accession>Q4W7H0</accession>
<dbReference type="EMBL" id="AB195300">
    <property type="protein sequence ID" value="BAD98707.1"/>
    <property type="molecule type" value="Genomic_DNA"/>
</dbReference>
<dbReference type="GO" id="GO:0005829">
    <property type="term" value="C:cytosol"/>
    <property type="evidence" value="ECO:0007669"/>
    <property type="project" value="UniProtKB-ARBA"/>
</dbReference>
<dbReference type="GO" id="GO:0005882">
    <property type="term" value="C:intermediate filament"/>
    <property type="evidence" value="ECO:0007669"/>
    <property type="project" value="UniProtKB-KW"/>
</dbReference>
<dbReference type="InterPro" id="IPR007951">
    <property type="entry name" value="KRTAP_PMG"/>
</dbReference>
<dbReference type="Pfam" id="PF05287">
    <property type="entry name" value="PMG"/>
    <property type="match status" value="1"/>
</dbReference>
<name>KR134_HYLLA</name>
<gene>
    <name type="primary">KRTAP13-4</name>
    <name type="synonym">KAP13.4</name>
</gene>
<evidence type="ECO:0000305" key="1"/>
<protein>
    <recommendedName>
        <fullName>Keratin-associated protein 13-4</fullName>
    </recommendedName>
</protein>
<proteinExistence type="inferred from homology"/>